<name>Y04O_BPT4</name>
<feature type="chain" id="PRO_0000165117" description="Uncharacterized 36.3 kDa protein in nrdC-mobD intergenic region">
    <location>
        <begin position="1"/>
        <end position="308"/>
    </location>
</feature>
<organismHost>
    <name type="scientific">Escherichia coli</name>
    <dbReference type="NCBI Taxonomy" id="562"/>
</organismHost>
<protein>
    <recommendedName>
        <fullName>Uncharacterized 36.3 kDa protein in nrdC-mobD intergenic region</fullName>
    </recommendedName>
</protein>
<gene>
    <name type="primary">y04O</name>
    <name type="synonym">nrdC.3</name>
</gene>
<keyword id="KW-1185">Reference proteome</keyword>
<proteinExistence type="predicted"/>
<accession>P39254</accession>
<organism>
    <name type="scientific">Enterobacteria phage T4</name>
    <name type="common">Bacteriophage T4</name>
    <dbReference type="NCBI Taxonomy" id="10665"/>
    <lineage>
        <taxon>Viruses</taxon>
        <taxon>Duplodnaviria</taxon>
        <taxon>Heunggongvirae</taxon>
        <taxon>Uroviricota</taxon>
        <taxon>Caudoviricetes</taxon>
        <taxon>Straboviridae</taxon>
        <taxon>Tevenvirinae</taxon>
        <taxon>Tequatrovirus</taxon>
    </lineage>
</organism>
<reference key="1">
    <citation type="submission" date="1996-11" db="EMBL/GenBank/DDBJ databases">
        <title>The 10.7 kb 'nonessential' region of bacteriophage T4 between the genes tk and nrdC: twenty new t4 genes, generally conserved among T-even phages.</title>
        <authorList>
            <person name="Mzhavia N."/>
            <person name="Marusich E."/>
            <person name="Djavakhishvili T."/>
            <person name="Neitzel J."/>
            <person name="Peterson S."/>
            <person name="Awaya M."/>
            <person name="Eidermiller J."/>
            <person name="Canada D."/>
            <person name="Tracy J."/>
            <person name="Gailbreath K."/>
            <person name="Paddison P."/>
            <person name="Anderson B."/>
            <person name="Stidham T."/>
            <person name="Blattner F."/>
            <person name="Kutter E.M."/>
        </authorList>
    </citation>
    <scope>NUCLEOTIDE SEQUENCE [GENOMIC DNA]</scope>
</reference>
<reference key="2">
    <citation type="journal article" date="2003" name="Microbiol. Mol. Biol. Rev.">
        <title>Bacteriophage T4 genome.</title>
        <authorList>
            <person name="Miller E.S."/>
            <person name="Kutter E."/>
            <person name="Mosig G."/>
            <person name="Arisaka F."/>
            <person name="Kunisawa T."/>
            <person name="Ruger W."/>
        </authorList>
    </citation>
    <scope>NUCLEOTIDE SEQUENCE [LARGE SCALE GENOMIC DNA]</scope>
</reference>
<sequence length="308" mass="36293">MKTRKHYIDYFDSLITKHRDYQKGHREVINNILRDFLDYIGWENHICKDTQNAYSHSLGSLLEWFKRSRLLSSVIAVNNVKKFMYPSYIETNVSNDNVVTFNIINDVKRTYLEEWFSKDSKEKFASEFSHEFNNNVNMLFKHSRRLFCHGDDRTINVNVKDWVTAKFIPSSQNGPFELLIIVCAPHEIYKNLPYMKPCEANKHNKTIRSLTYKLRTLLSKMDVVESFDDNTNYGLSLFETKVVIKLKDPNKFKPTPKPNHGNDTMKEEREYLSTRLIEVEKQIEEHTKVLKDLTAKANGLRNAIEVLK</sequence>
<dbReference type="EMBL" id="U76612">
    <property type="protein sequence ID" value="AAB26979.1"/>
    <property type="molecule type" value="Genomic_DNA"/>
</dbReference>
<dbReference type="EMBL" id="AF158101">
    <property type="protein sequence ID" value="AAD42631.1"/>
    <property type="molecule type" value="Genomic_DNA"/>
</dbReference>
<dbReference type="RefSeq" id="NP_049701.1">
    <property type="nucleotide sequence ID" value="NC_000866.4"/>
</dbReference>
<dbReference type="SMR" id="P39254"/>
<dbReference type="GeneID" id="1258543"/>
<dbReference type="KEGG" id="vg:1258543"/>
<dbReference type="OrthoDB" id="6465at10239"/>
<dbReference type="Proteomes" id="UP000009087">
    <property type="component" value="Segment"/>
</dbReference>